<proteinExistence type="inferred from homology"/>
<feature type="chain" id="PRO_1000083096" description="Leucyl/phenylalanyl-tRNA--protein transferase">
    <location>
        <begin position="1"/>
        <end position="212"/>
    </location>
</feature>
<name>LFTR_FLAJ1</name>
<organism>
    <name type="scientific">Flavobacterium johnsoniae (strain ATCC 17061 / DSM 2064 / JCM 8514 / BCRC 14874 / CCUG 350202 / NBRC 14942 / NCIMB 11054 / UW101)</name>
    <name type="common">Cytophaga johnsonae</name>
    <dbReference type="NCBI Taxonomy" id="376686"/>
    <lineage>
        <taxon>Bacteria</taxon>
        <taxon>Pseudomonadati</taxon>
        <taxon>Bacteroidota</taxon>
        <taxon>Flavobacteriia</taxon>
        <taxon>Flavobacteriales</taxon>
        <taxon>Flavobacteriaceae</taxon>
        <taxon>Flavobacterium</taxon>
    </lineage>
</organism>
<comment type="function">
    <text evidence="1">Functions in the N-end rule pathway of protein degradation where it conjugates Leu, Phe and, less efficiently, Met from aminoacyl-tRNAs to the N-termini of proteins containing an N-terminal arginine or lysine.</text>
</comment>
<comment type="catalytic activity">
    <reaction evidence="1">
        <text>N-terminal L-lysyl-[protein] + L-leucyl-tRNA(Leu) = N-terminal L-leucyl-L-lysyl-[protein] + tRNA(Leu) + H(+)</text>
        <dbReference type="Rhea" id="RHEA:12340"/>
        <dbReference type="Rhea" id="RHEA-COMP:9613"/>
        <dbReference type="Rhea" id="RHEA-COMP:9622"/>
        <dbReference type="Rhea" id="RHEA-COMP:12670"/>
        <dbReference type="Rhea" id="RHEA-COMP:12671"/>
        <dbReference type="ChEBI" id="CHEBI:15378"/>
        <dbReference type="ChEBI" id="CHEBI:65249"/>
        <dbReference type="ChEBI" id="CHEBI:78442"/>
        <dbReference type="ChEBI" id="CHEBI:78494"/>
        <dbReference type="ChEBI" id="CHEBI:133043"/>
        <dbReference type="EC" id="2.3.2.6"/>
    </reaction>
</comment>
<comment type="catalytic activity">
    <reaction evidence="1">
        <text>N-terminal L-arginyl-[protein] + L-leucyl-tRNA(Leu) = N-terminal L-leucyl-L-arginyl-[protein] + tRNA(Leu) + H(+)</text>
        <dbReference type="Rhea" id="RHEA:50416"/>
        <dbReference type="Rhea" id="RHEA-COMP:9613"/>
        <dbReference type="Rhea" id="RHEA-COMP:9622"/>
        <dbReference type="Rhea" id="RHEA-COMP:12672"/>
        <dbReference type="Rhea" id="RHEA-COMP:12673"/>
        <dbReference type="ChEBI" id="CHEBI:15378"/>
        <dbReference type="ChEBI" id="CHEBI:64719"/>
        <dbReference type="ChEBI" id="CHEBI:78442"/>
        <dbReference type="ChEBI" id="CHEBI:78494"/>
        <dbReference type="ChEBI" id="CHEBI:133044"/>
        <dbReference type="EC" id="2.3.2.6"/>
    </reaction>
</comment>
<comment type="catalytic activity">
    <reaction evidence="1">
        <text>L-phenylalanyl-tRNA(Phe) + an N-terminal L-alpha-aminoacyl-[protein] = an N-terminal L-phenylalanyl-L-alpha-aminoacyl-[protein] + tRNA(Phe)</text>
        <dbReference type="Rhea" id="RHEA:43632"/>
        <dbReference type="Rhea" id="RHEA-COMP:9668"/>
        <dbReference type="Rhea" id="RHEA-COMP:9699"/>
        <dbReference type="Rhea" id="RHEA-COMP:10636"/>
        <dbReference type="Rhea" id="RHEA-COMP:10637"/>
        <dbReference type="ChEBI" id="CHEBI:78442"/>
        <dbReference type="ChEBI" id="CHEBI:78531"/>
        <dbReference type="ChEBI" id="CHEBI:78597"/>
        <dbReference type="ChEBI" id="CHEBI:83561"/>
        <dbReference type="EC" id="2.3.2.6"/>
    </reaction>
</comment>
<comment type="subcellular location">
    <subcellularLocation>
        <location evidence="1">Cytoplasm</location>
    </subcellularLocation>
</comment>
<comment type="similarity">
    <text evidence="1">Belongs to the L/F-transferase family.</text>
</comment>
<protein>
    <recommendedName>
        <fullName evidence="1">Leucyl/phenylalanyl-tRNA--protein transferase</fullName>
        <ecNumber evidence="1">2.3.2.6</ecNumber>
    </recommendedName>
    <alternativeName>
        <fullName evidence="1">L/F-transferase</fullName>
    </alternativeName>
    <alternativeName>
        <fullName evidence="1">Leucyltransferase</fullName>
    </alternativeName>
    <alternativeName>
        <fullName evidence="1">Phenyalanyltransferase</fullName>
    </alternativeName>
</protein>
<evidence type="ECO:0000255" key="1">
    <source>
        <dbReference type="HAMAP-Rule" id="MF_00688"/>
    </source>
</evidence>
<gene>
    <name evidence="1" type="primary">aat</name>
    <name type="ordered locus">Fjoh_1595</name>
</gene>
<keyword id="KW-0012">Acyltransferase</keyword>
<keyword id="KW-0963">Cytoplasm</keyword>
<keyword id="KW-0808">Transferase</keyword>
<sequence length="212" mass="24463">MYYLFKDLFFPPVSEADEEGVLAIGGDLDPERLKLAYKSGIFPWFNEGEPILWWAPDPRMVLFFDELVISKSMRKILNKKIFKVTYNKNFKEVISNCQQIKREGQNGTWISNEMIEAYCELHKQGIAKSVEVWQDEVLVGGLYGIDLGHVFCGESMFSKVSNASKTAFIALALYLKKENYKLLDCQVYNSHLESLGCREIDREEFMSILKSK</sequence>
<dbReference type="EC" id="2.3.2.6" evidence="1"/>
<dbReference type="EMBL" id="CP000685">
    <property type="protein sequence ID" value="ABQ04627.1"/>
    <property type="molecule type" value="Genomic_DNA"/>
</dbReference>
<dbReference type="RefSeq" id="WP_012023671.1">
    <property type="nucleotide sequence ID" value="NC_009441.1"/>
</dbReference>
<dbReference type="SMR" id="A5FJI6"/>
<dbReference type="STRING" id="376686.Fjoh_1595"/>
<dbReference type="KEGG" id="fjo:Fjoh_1595"/>
<dbReference type="eggNOG" id="COG2360">
    <property type="taxonomic scope" value="Bacteria"/>
</dbReference>
<dbReference type="HOGENOM" id="CLU_075045_0_0_10"/>
<dbReference type="OrthoDB" id="9790282at2"/>
<dbReference type="Proteomes" id="UP000006694">
    <property type="component" value="Chromosome"/>
</dbReference>
<dbReference type="GO" id="GO:0005737">
    <property type="term" value="C:cytoplasm"/>
    <property type="evidence" value="ECO:0007669"/>
    <property type="project" value="UniProtKB-SubCell"/>
</dbReference>
<dbReference type="GO" id="GO:0008914">
    <property type="term" value="F:leucyl-tRNA--protein transferase activity"/>
    <property type="evidence" value="ECO:0007669"/>
    <property type="project" value="UniProtKB-UniRule"/>
</dbReference>
<dbReference type="GO" id="GO:0030163">
    <property type="term" value="P:protein catabolic process"/>
    <property type="evidence" value="ECO:0007669"/>
    <property type="project" value="UniProtKB-UniRule"/>
</dbReference>
<dbReference type="FunFam" id="3.30.70.3550:FF:000001">
    <property type="entry name" value="Leucyl/phenylalanyl-tRNA--protein transferase"/>
    <property type="match status" value="1"/>
</dbReference>
<dbReference type="Gene3D" id="3.40.630.70">
    <property type="entry name" value="Leucyl/phenylalanyl-tRNA-protein transferase, C-terminal domain"/>
    <property type="match status" value="1"/>
</dbReference>
<dbReference type="Gene3D" id="3.30.70.3550">
    <property type="entry name" value="Leucyl/phenylalanyl-tRNA-protein transferase, N-terminal domain"/>
    <property type="match status" value="1"/>
</dbReference>
<dbReference type="HAMAP" id="MF_00688">
    <property type="entry name" value="Leu_Phe_trans"/>
    <property type="match status" value="1"/>
</dbReference>
<dbReference type="InterPro" id="IPR016181">
    <property type="entry name" value="Acyl_CoA_acyltransferase"/>
</dbReference>
<dbReference type="InterPro" id="IPR004616">
    <property type="entry name" value="Leu/Phe-tRNA_Trfase"/>
</dbReference>
<dbReference type="InterPro" id="IPR042203">
    <property type="entry name" value="Leu/Phe-tRNA_Trfase_C"/>
</dbReference>
<dbReference type="InterPro" id="IPR042221">
    <property type="entry name" value="Leu/Phe-tRNA_Trfase_N"/>
</dbReference>
<dbReference type="NCBIfam" id="TIGR00667">
    <property type="entry name" value="aat"/>
    <property type="match status" value="1"/>
</dbReference>
<dbReference type="PANTHER" id="PTHR30098">
    <property type="entry name" value="LEUCYL/PHENYLALANYL-TRNA--PROTEIN TRANSFERASE"/>
    <property type="match status" value="1"/>
</dbReference>
<dbReference type="PANTHER" id="PTHR30098:SF2">
    <property type="entry name" value="LEUCYL_PHENYLALANYL-TRNA--PROTEIN TRANSFERASE"/>
    <property type="match status" value="1"/>
</dbReference>
<dbReference type="Pfam" id="PF03588">
    <property type="entry name" value="Leu_Phe_trans"/>
    <property type="match status" value="1"/>
</dbReference>
<dbReference type="SUPFAM" id="SSF55729">
    <property type="entry name" value="Acyl-CoA N-acyltransferases (Nat)"/>
    <property type="match status" value="1"/>
</dbReference>
<accession>A5FJI6</accession>
<reference key="1">
    <citation type="journal article" date="2009" name="Appl. Environ. Microbiol.">
        <title>Novel features of the polysaccharide-digesting gliding bacterium Flavobacterium johnsoniae as revealed by genome sequence analysis.</title>
        <authorList>
            <person name="McBride M.J."/>
            <person name="Xie G."/>
            <person name="Martens E.C."/>
            <person name="Lapidus A."/>
            <person name="Henrissat B."/>
            <person name="Rhodes R.G."/>
            <person name="Goltsman E."/>
            <person name="Wang W."/>
            <person name="Xu J."/>
            <person name="Hunnicutt D.W."/>
            <person name="Staroscik A.M."/>
            <person name="Hoover T.R."/>
            <person name="Cheng Y.Q."/>
            <person name="Stein J.L."/>
        </authorList>
    </citation>
    <scope>NUCLEOTIDE SEQUENCE [LARGE SCALE GENOMIC DNA]</scope>
    <source>
        <strain>ATCC 17061 / DSM 2064 / JCM 8514 / BCRC 14874 / CCUG 350202 / NBRC 14942 / NCIMB 11054 / UW101</strain>
    </source>
</reference>